<feature type="chain" id="PRO_1000021799" description="Homoserine O-acetyltransferase">
    <location>
        <begin position="1"/>
        <end position="305"/>
    </location>
</feature>
<feature type="active site" description="Acyl-thioester intermediate" evidence="1">
    <location>
        <position position="142"/>
    </location>
</feature>
<feature type="active site" description="Proton acceptor" evidence="1">
    <location>
        <position position="235"/>
    </location>
</feature>
<feature type="active site" evidence="1">
    <location>
        <position position="237"/>
    </location>
</feature>
<feature type="binding site" evidence="1">
    <location>
        <position position="163"/>
    </location>
    <ligand>
        <name>substrate</name>
    </ligand>
</feature>
<feature type="binding site" evidence="1">
    <location>
        <position position="192"/>
    </location>
    <ligand>
        <name>substrate</name>
    </ligand>
</feature>
<feature type="binding site" evidence="1">
    <location>
        <position position="249"/>
    </location>
    <ligand>
        <name>substrate</name>
    </ligand>
</feature>
<feature type="site" description="Important for acyl-CoA specificity" evidence="1">
    <location>
        <position position="111"/>
    </location>
</feature>
<feature type="site" description="Important for substrate specificity" evidence="1">
    <location>
        <position position="192"/>
    </location>
</feature>
<sequence>MPLNLPDKLPAIELLKEENIFVIDNSRATQQDIRPLRIVILNLMPLKITTETDLVRLLSNTPLQVEISFMKIKSHTSKNTPIEHMKTFYTDFDKMREDRYDGMIITGAPVEQMEFEEVNYWDEITEIFDWARTHVTSTLYICWAAQAGLYHHYGIPKYALDKKMFGIFKHRTLLPLHPIFRGFDDEFYVPHSRHTEVRKEDILKVPELTLLSESDDSGVYMVVARGGREFFVTGHSEYSPLTLDTEYRRDVSKGLPIEIPRNYYVNDDPDKGPLVRWRGHANLLFSNWLNYFVYQETPYNIEDIR</sequence>
<organism>
    <name type="scientific">Bacteroides fragilis (strain ATCC 25285 / DSM 2151 / CCUG 4856 / JCM 11019 / LMG 10263 / NCTC 9343 / Onslow / VPI 2553 / EN-2)</name>
    <dbReference type="NCBI Taxonomy" id="272559"/>
    <lineage>
        <taxon>Bacteria</taxon>
        <taxon>Pseudomonadati</taxon>
        <taxon>Bacteroidota</taxon>
        <taxon>Bacteroidia</taxon>
        <taxon>Bacteroidales</taxon>
        <taxon>Bacteroidaceae</taxon>
        <taxon>Bacteroides</taxon>
    </lineage>
</organism>
<proteinExistence type="evidence at protein level"/>
<accession>Q5LHS7</accession>
<gene>
    <name evidence="1 3" type="primary">metAA</name>
    <name type="ordered locus">BF0548</name>
</gene>
<name>METAA_BACFN</name>
<keyword id="KW-0012">Acyltransferase</keyword>
<keyword id="KW-0028">Amino-acid biosynthesis</keyword>
<keyword id="KW-0963">Cytoplasm</keyword>
<keyword id="KW-0486">Methionine biosynthesis</keyword>
<keyword id="KW-0808">Transferase</keyword>
<evidence type="ECO:0000255" key="1">
    <source>
        <dbReference type="HAMAP-Rule" id="MF_00295"/>
    </source>
</evidence>
<evidence type="ECO:0000269" key="2">
    <source>
    </source>
</evidence>
<evidence type="ECO:0000303" key="3">
    <source>
    </source>
</evidence>
<reference key="1">
    <citation type="journal article" date="2005" name="Science">
        <title>Extensive DNA inversions in the B. fragilis genome control variable gene expression.</title>
        <authorList>
            <person name="Cerdeno-Tarraga A.-M."/>
            <person name="Patrick S."/>
            <person name="Crossman L.C."/>
            <person name="Blakely G."/>
            <person name="Abratt V."/>
            <person name="Lennard N."/>
            <person name="Poxton I."/>
            <person name="Duerden B."/>
            <person name="Harris B."/>
            <person name="Quail M.A."/>
            <person name="Barron A."/>
            <person name="Clark L."/>
            <person name="Corton C."/>
            <person name="Doggett J."/>
            <person name="Holden M.T.G."/>
            <person name="Larke N."/>
            <person name="Line A."/>
            <person name="Lord A."/>
            <person name="Norbertczak H."/>
            <person name="Ormond D."/>
            <person name="Price C."/>
            <person name="Rabbinowitsch E."/>
            <person name="Woodward J."/>
            <person name="Barrell B.G."/>
            <person name="Parkhill J."/>
        </authorList>
    </citation>
    <scope>NUCLEOTIDE SEQUENCE [LARGE SCALE GENOMIC DNA]</scope>
    <source>
        <strain>ATCC 25285 / DSM 2151 / CCUG 4856 / JCM 11019 / LMG 10263 / NCTC 9343 / Onslow / VPI 2553 / EN-2</strain>
    </source>
</reference>
<reference key="2">
    <citation type="journal article" date="2017" name="Nat. Chem. Biol.">
        <title>Parallel evolution of non-homologous isofunctional enzymes in methionine biosynthesis.</title>
        <authorList>
            <person name="Bastard K."/>
            <person name="Perret A."/>
            <person name="Mariage A."/>
            <person name="Bessonnet T."/>
            <person name="Pinet-Turpault A."/>
            <person name="Petit J.L."/>
            <person name="Darii E."/>
            <person name="Bazire P."/>
            <person name="Vergne-Vaxelaire C."/>
            <person name="Brewee C."/>
            <person name="Debard A."/>
            <person name="Pellouin V."/>
            <person name="Besnard-Gonnet M."/>
            <person name="Artiguenave F."/>
            <person name="Medigue C."/>
            <person name="Vallenet D."/>
            <person name="Danchin A."/>
            <person name="Zaparucha A."/>
            <person name="Weissenbach J."/>
            <person name="Salanoubat M."/>
            <person name="de Berardinis V."/>
        </authorList>
    </citation>
    <scope>FUNCTION</scope>
    <scope>CATALYTIC ACTIVITY</scope>
</reference>
<comment type="function">
    <text evidence="1 2">Transfers an acetyl group from acetyl-CoA to L-homoserine, forming acetyl-L-homoserine.</text>
</comment>
<comment type="catalytic activity">
    <reaction evidence="1 2">
        <text>L-homoserine + acetyl-CoA = O-acetyl-L-homoserine + CoA</text>
        <dbReference type="Rhea" id="RHEA:13701"/>
        <dbReference type="ChEBI" id="CHEBI:57287"/>
        <dbReference type="ChEBI" id="CHEBI:57288"/>
        <dbReference type="ChEBI" id="CHEBI:57476"/>
        <dbReference type="ChEBI" id="CHEBI:57716"/>
        <dbReference type="EC" id="2.3.1.31"/>
    </reaction>
</comment>
<comment type="pathway">
    <text evidence="1">Amino-acid biosynthesis; L-methionine biosynthesis via de novo pathway; O-acetyl-L-homoserine from L-homoserine: step 1/1.</text>
</comment>
<comment type="subcellular location">
    <subcellularLocation>
        <location evidence="1">Cytoplasm</location>
    </subcellularLocation>
</comment>
<comment type="similarity">
    <text evidence="1">Belongs to the MetA family.</text>
</comment>
<dbReference type="EC" id="2.3.1.31" evidence="1 2"/>
<dbReference type="EMBL" id="CR626927">
    <property type="protein sequence ID" value="CAH06303.1"/>
    <property type="molecule type" value="Genomic_DNA"/>
</dbReference>
<dbReference type="SMR" id="Q5LHS7"/>
<dbReference type="PaxDb" id="272559-BF9343_0524"/>
<dbReference type="KEGG" id="bfs:BF9343_0524"/>
<dbReference type="eggNOG" id="COG1897">
    <property type="taxonomic scope" value="Bacteria"/>
</dbReference>
<dbReference type="HOGENOM" id="CLU_057851_0_1_10"/>
<dbReference type="UniPathway" id="UPA00051">
    <property type="reaction ID" value="UER00074"/>
</dbReference>
<dbReference type="Proteomes" id="UP000006731">
    <property type="component" value="Chromosome"/>
</dbReference>
<dbReference type="GO" id="GO:0005737">
    <property type="term" value="C:cytoplasm"/>
    <property type="evidence" value="ECO:0007669"/>
    <property type="project" value="UniProtKB-SubCell"/>
</dbReference>
<dbReference type="GO" id="GO:0004414">
    <property type="term" value="F:homoserine O-acetyltransferase activity"/>
    <property type="evidence" value="ECO:0007669"/>
    <property type="project" value="UniProtKB-EC"/>
</dbReference>
<dbReference type="GO" id="GO:0008899">
    <property type="term" value="F:homoserine O-succinyltransferase activity"/>
    <property type="evidence" value="ECO:0007669"/>
    <property type="project" value="UniProtKB-UniRule"/>
</dbReference>
<dbReference type="GO" id="GO:0019281">
    <property type="term" value="P:L-methionine biosynthetic process from homoserine via O-succinyl-L-homoserine and cystathionine"/>
    <property type="evidence" value="ECO:0007669"/>
    <property type="project" value="InterPro"/>
</dbReference>
<dbReference type="CDD" id="cd03131">
    <property type="entry name" value="GATase1_HTS"/>
    <property type="match status" value="1"/>
</dbReference>
<dbReference type="FunFam" id="3.40.50.880:FF:000004">
    <property type="entry name" value="Homoserine O-succinyltransferase"/>
    <property type="match status" value="1"/>
</dbReference>
<dbReference type="Gene3D" id="3.40.50.880">
    <property type="match status" value="1"/>
</dbReference>
<dbReference type="HAMAP" id="MF_00295">
    <property type="entry name" value="MetA_acyltransf"/>
    <property type="match status" value="1"/>
</dbReference>
<dbReference type="InterPro" id="IPR029062">
    <property type="entry name" value="Class_I_gatase-like"/>
</dbReference>
<dbReference type="InterPro" id="IPR005697">
    <property type="entry name" value="HST_MetA"/>
</dbReference>
<dbReference type="InterPro" id="IPR033752">
    <property type="entry name" value="MetA_family"/>
</dbReference>
<dbReference type="NCBIfam" id="TIGR01001">
    <property type="entry name" value="metA"/>
    <property type="match status" value="1"/>
</dbReference>
<dbReference type="PANTHER" id="PTHR20919">
    <property type="entry name" value="HOMOSERINE O-SUCCINYLTRANSFERASE"/>
    <property type="match status" value="1"/>
</dbReference>
<dbReference type="PANTHER" id="PTHR20919:SF0">
    <property type="entry name" value="HOMOSERINE O-SUCCINYLTRANSFERASE"/>
    <property type="match status" value="1"/>
</dbReference>
<dbReference type="Pfam" id="PF04204">
    <property type="entry name" value="HTS"/>
    <property type="match status" value="1"/>
</dbReference>
<dbReference type="PIRSF" id="PIRSF000450">
    <property type="entry name" value="H_ser_succinyltr"/>
    <property type="match status" value="1"/>
</dbReference>
<dbReference type="SUPFAM" id="SSF52317">
    <property type="entry name" value="Class I glutamine amidotransferase-like"/>
    <property type="match status" value="1"/>
</dbReference>
<protein>
    <recommendedName>
        <fullName evidence="1">Homoserine O-acetyltransferase</fullName>
        <shortName evidence="1 3">HAT</shortName>
        <ecNumber evidence="1 2">2.3.1.31</ecNumber>
    </recommendedName>
    <alternativeName>
        <fullName evidence="1">Homoserine transacetylase</fullName>
        <shortName evidence="1">HTA</shortName>
    </alternativeName>
</protein>